<feature type="chain" id="PRO_0000255888" description="Pyridoxine/pyridoxamine 5'-phosphate oxidase">
    <location>
        <begin position="1"/>
        <end position="217"/>
    </location>
</feature>
<feature type="binding site" evidence="1">
    <location>
        <begin position="13"/>
        <end position="16"/>
    </location>
    <ligand>
        <name>substrate</name>
    </ligand>
</feature>
<feature type="binding site" evidence="1">
    <location>
        <begin position="66"/>
        <end position="71"/>
    </location>
    <ligand>
        <name>FMN</name>
        <dbReference type="ChEBI" id="CHEBI:58210"/>
    </ligand>
</feature>
<feature type="binding site" evidence="1">
    <location>
        <position position="71"/>
    </location>
    <ligand>
        <name>substrate</name>
    </ligand>
</feature>
<feature type="binding site" evidence="1">
    <location>
        <begin position="81"/>
        <end position="82"/>
    </location>
    <ligand>
        <name>FMN</name>
        <dbReference type="ChEBI" id="CHEBI:58210"/>
    </ligand>
</feature>
<feature type="binding site" evidence="1">
    <location>
        <position position="87"/>
    </location>
    <ligand>
        <name>FMN</name>
        <dbReference type="ChEBI" id="CHEBI:58210"/>
    </ligand>
</feature>
<feature type="binding site" evidence="1">
    <location>
        <position position="88"/>
    </location>
    <ligand>
        <name>FMN</name>
        <dbReference type="ChEBI" id="CHEBI:58210"/>
    </ligand>
</feature>
<feature type="binding site" evidence="1">
    <location>
        <position position="110"/>
    </location>
    <ligand>
        <name>FMN</name>
        <dbReference type="ChEBI" id="CHEBI:58210"/>
    </ligand>
</feature>
<feature type="binding site" evidence="1">
    <location>
        <position position="128"/>
    </location>
    <ligand>
        <name>substrate</name>
    </ligand>
</feature>
<feature type="binding site" evidence="1">
    <location>
        <position position="132"/>
    </location>
    <ligand>
        <name>substrate</name>
    </ligand>
</feature>
<feature type="binding site" evidence="1">
    <location>
        <position position="136"/>
    </location>
    <ligand>
        <name>substrate</name>
    </ligand>
</feature>
<feature type="binding site" evidence="1">
    <location>
        <begin position="145"/>
        <end position="146"/>
    </location>
    <ligand>
        <name>FMN</name>
        <dbReference type="ChEBI" id="CHEBI:58210"/>
    </ligand>
</feature>
<feature type="binding site" evidence="1">
    <location>
        <position position="190"/>
    </location>
    <ligand>
        <name>FMN</name>
        <dbReference type="ChEBI" id="CHEBI:58210"/>
    </ligand>
</feature>
<feature type="binding site" evidence="1">
    <location>
        <begin position="196"/>
        <end position="198"/>
    </location>
    <ligand>
        <name>substrate</name>
    </ligand>
</feature>
<feature type="binding site" evidence="1">
    <location>
        <position position="200"/>
    </location>
    <ligand>
        <name>FMN</name>
        <dbReference type="ChEBI" id="CHEBI:58210"/>
    </ligand>
</feature>
<comment type="function">
    <text evidence="1">Catalyzes the oxidation of either pyridoxine 5'-phosphate (PNP) or pyridoxamine 5'-phosphate (PMP) into pyridoxal 5'-phosphate (PLP).</text>
</comment>
<comment type="catalytic activity">
    <reaction evidence="1">
        <text>pyridoxamine 5'-phosphate + O2 + H2O = pyridoxal 5'-phosphate + H2O2 + NH4(+)</text>
        <dbReference type="Rhea" id="RHEA:15817"/>
        <dbReference type="ChEBI" id="CHEBI:15377"/>
        <dbReference type="ChEBI" id="CHEBI:15379"/>
        <dbReference type="ChEBI" id="CHEBI:16240"/>
        <dbReference type="ChEBI" id="CHEBI:28938"/>
        <dbReference type="ChEBI" id="CHEBI:58451"/>
        <dbReference type="ChEBI" id="CHEBI:597326"/>
        <dbReference type="EC" id="1.4.3.5"/>
    </reaction>
</comment>
<comment type="catalytic activity">
    <reaction evidence="1">
        <text>pyridoxine 5'-phosphate + O2 = pyridoxal 5'-phosphate + H2O2</text>
        <dbReference type="Rhea" id="RHEA:15149"/>
        <dbReference type="ChEBI" id="CHEBI:15379"/>
        <dbReference type="ChEBI" id="CHEBI:16240"/>
        <dbReference type="ChEBI" id="CHEBI:58589"/>
        <dbReference type="ChEBI" id="CHEBI:597326"/>
        <dbReference type="EC" id="1.4.3.5"/>
    </reaction>
</comment>
<comment type="cofactor">
    <cofactor evidence="1">
        <name>FMN</name>
        <dbReference type="ChEBI" id="CHEBI:58210"/>
    </cofactor>
    <text evidence="1">Binds 1 FMN per subunit.</text>
</comment>
<comment type="pathway">
    <text evidence="1">Cofactor metabolism; pyridoxal 5'-phosphate salvage; pyridoxal 5'-phosphate from pyridoxamine 5'-phosphate: step 1/1.</text>
</comment>
<comment type="pathway">
    <text evidence="1">Cofactor metabolism; pyridoxal 5'-phosphate salvage; pyridoxal 5'-phosphate from pyridoxine 5'-phosphate: step 1/1.</text>
</comment>
<comment type="subunit">
    <text evidence="1">Homodimer.</text>
</comment>
<comment type="similarity">
    <text evidence="1">Belongs to the pyridoxamine 5'-phosphate oxidase family.</text>
</comment>
<comment type="sequence caution" evidence="2">
    <conflict type="erroneous initiation">
        <sequence resource="EMBL-CDS" id="ABG05300"/>
    </conflict>
</comment>
<evidence type="ECO:0000255" key="1">
    <source>
        <dbReference type="HAMAP-Rule" id="MF_01629"/>
    </source>
</evidence>
<evidence type="ECO:0000305" key="2"/>
<name>PDXH_RUBXD</name>
<accession>Q1ATH8</accession>
<gene>
    <name evidence="1" type="primary">pdxH</name>
    <name type="ordered locus">Rxyl_2372</name>
</gene>
<proteinExistence type="inferred from homology"/>
<reference key="1">
    <citation type="submission" date="2006-06" db="EMBL/GenBank/DDBJ databases">
        <title>Complete sequence of Rubrobacter xylanophilus DSM 9941.</title>
        <authorList>
            <consortium name="US DOE Joint Genome Institute"/>
            <person name="Copeland A."/>
            <person name="Lucas S."/>
            <person name="Lapidus A."/>
            <person name="Barry K."/>
            <person name="Detter J.C."/>
            <person name="Glavina del Rio T."/>
            <person name="Hammon N."/>
            <person name="Israni S."/>
            <person name="Dalin E."/>
            <person name="Tice H."/>
            <person name="Pitluck S."/>
            <person name="Munk A.C."/>
            <person name="Brettin T."/>
            <person name="Bruce D."/>
            <person name="Han C."/>
            <person name="Tapia R."/>
            <person name="Gilna P."/>
            <person name="Schmutz J."/>
            <person name="Larimer F."/>
            <person name="Land M."/>
            <person name="Hauser L."/>
            <person name="Kyrpides N."/>
            <person name="Lykidis A."/>
            <person name="da Costa M.S."/>
            <person name="Rainey F.A."/>
            <person name="Empadinhas N."/>
            <person name="Jolivet E."/>
            <person name="Battista J.R."/>
            <person name="Richardson P."/>
        </authorList>
    </citation>
    <scope>NUCLEOTIDE SEQUENCE [LARGE SCALE GENOMIC DNA]</scope>
    <source>
        <strain>DSM 9941 / JCM 11954 / NBRC 16129 / PRD-1</strain>
    </source>
</reference>
<protein>
    <recommendedName>
        <fullName evidence="1">Pyridoxine/pyridoxamine 5'-phosphate oxidase</fullName>
        <ecNumber evidence="1">1.4.3.5</ecNumber>
    </recommendedName>
    <alternativeName>
        <fullName evidence="1">PNP/PMP oxidase</fullName>
        <shortName evidence="1">PNPOx</shortName>
    </alternativeName>
    <alternativeName>
        <fullName evidence="1">Pyridoxal 5'-phosphate synthase</fullName>
    </alternativeName>
</protein>
<sequence length="217" mass="25168">MPEGARRDLAGLRREYTRAGLAEDGADPDPIRQFGRWFEEALRAGLYEPNAMVLATATPDGRPSARTVLLKGFDERGFVFYTNYGGRKSREIEANPRVALLFYWGELERQVRVEGTAGRTSEEESDAYFATRPRGSQLGAWASRQSEPAESREELERRLAELERRFEGRPVPRPPFWGGYRVRPERIEFWQGRENRLHDRLLYAREGPGWRRVRLQP</sequence>
<keyword id="KW-0285">Flavoprotein</keyword>
<keyword id="KW-0288">FMN</keyword>
<keyword id="KW-0560">Oxidoreductase</keyword>
<keyword id="KW-0664">Pyridoxine biosynthesis</keyword>
<keyword id="KW-1185">Reference proteome</keyword>
<dbReference type="EC" id="1.4.3.5" evidence="1"/>
<dbReference type="EMBL" id="CP000386">
    <property type="protein sequence ID" value="ABG05300.1"/>
    <property type="status" value="ALT_INIT"/>
    <property type="molecule type" value="Genomic_DNA"/>
</dbReference>
<dbReference type="SMR" id="Q1ATH8"/>
<dbReference type="STRING" id="266117.Rxyl_2372"/>
<dbReference type="KEGG" id="rxy:Rxyl_2372"/>
<dbReference type="eggNOG" id="COG0259">
    <property type="taxonomic scope" value="Bacteria"/>
</dbReference>
<dbReference type="HOGENOM" id="CLU_032263_2_2_11"/>
<dbReference type="PhylomeDB" id="Q1ATH8"/>
<dbReference type="UniPathway" id="UPA01068">
    <property type="reaction ID" value="UER00304"/>
</dbReference>
<dbReference type="UniPathway" id="UPA01068">
    <property type="reaction ID" value="UER00305"/>
</dbReference>
<dbReference type="Proteomes" id="UP000006637">
    <property type="component" value="Chromosome"/>
</dbReference>
<dbReference type="GO" id="GO:0010181">
    <property type="term" value="F:FMN binding"/>
    <property type="evidence" value="ECO:0007669"/>
    <property type="project" value="UniProtKB-UniRule"/>
</dbReference>
<dbReference type="GO" id="GO:0004733">
    <property type="term" value="F:pyridoxamine phosphate oxidase activity"/>
    <property type="evidence" value="ECO:0007669"/>
    <property type="project" value="UniProtKB-UniRule"/>
</dbReference>
<dbReference type="GO" id="GO:0008615">
    <property type="term" value="P:pyridoxine biosynthetic process"/>
    <property type="evidence" value="ECO:0007669"/>
    <property type="project" value="UniProtKB-KW"/>
</dbReference>
<dbReference type="FunFam" id="2.30.110.10:FF:000005">
    <property type="entry name" value="NAD(P)H-hydrate epimerase"/>
    <property type="match status" value="1"/>
</dbReference>
<dbReference type="Gene3D" id="2.30.110.10">
    <property type="entry name" value="Electron Transport, Fmn-binding Protein, Chain A"/>
    <property type="match status" value="1"/>
</dbReference>
<dbReference type="HAMAP" id="MF_01629">
    <property type="entry name" value="PdxH"/>
    <property type="match status" value="1"/>
</dbReference>
<dbReference type="InterPro" id="IPR000659">
    <property type="entry name" value="Pyridox_Oxase"/>
</dbReference>
<dbReference type="InterPro" id="IPR019740">
    <property type="entry name" value="Pyridox_Oxase_CS"/>
</dbReference>
<dbReference type="InterPro" id="IPR011576">
    <property type="entry name" value="Pyridox_Oxase_N"/>
</dbReference>
<dbReference type="InterPro" id="IPR019576">
    <property type="entry name" value="Pyridoxamine_oxidase_dimer_C"/>
</dbReference>
<dbReference type="InterPro" id="IPR012349">
    <property type="entry name" value="Split_barrel_FMN-bd"/>
</dbReference>
<dbReference type="NCBIfam" id="TIGR00558">
    <property type="entry name" value="pdxH"/>
    <property type="match status" value="1"/>
</dbReference>
<dbReference type="NCBIfam" id="NF004231">
    <property type="entry name" value="PRK05679.1"/>
    <property type="match status" value="1"/>
</dbReference>
<dbReference type="PANTHER" id="PTHR10851:SF0">
    <property type="entry name" value="PYRIDOXINE-5'-PHOSPHATE OXIDASE"/>
    <property type="match status" value="1"/>
</dbReference>
<dbReference type="PANTHER" id="PTHR10851">
    <property type="entry name" value="PYRIDOXINE-5-PHOSPHATE OXIDASE"/>
    <property type="match status" value="1"/>
</dbReference>
<dbReference type="Pfam" id="PF10590">
    <property type="entry name" value="PNP_phzG_C"/>
    <property type="match status" value="1"/>
</dbReference>
<dbReference type="Pfam" id="PF01243">
    <property type="entry name" value="PNPOx_N"/>
    <property type="match status" value="1"/>
</dbReference>
<dbReference type="PIRSF" id="PIRSF000190">
    <property type="entry name" value="Pyd_amn-ph_oxd"/>
    <property type="match status" value="1"/>
</dbReference>
<dbReference type="SUPFAM" id="SSF50475">
    <property type="entry name" value="FMN-binding split barrel"/>
    <property type="match status" value="1"/>
</dbReference>
<dbReference type="PROSITE" id="PS01064">
    <property type="entry name" value="PYRIDOX_OXIDASE"/>
    <property type="match status" value="1"/>
</dbReference>
<organism>
    <name type="scientific">Rubrobacter xylanophilus (strain DSM 9941 / JCM 11954 / NBRC 16129 / PRD-1)</name>
    <dbReference type="NCBI Taxonomy" id="266117"/>
    <lineage>
        <taxon>Bacteria</taxon>
        <taxon>Bacillati</taxon>
        <taxon>Actinomycetota</taxon>
        <taxon>Rubrobacteria</taxon>
        <taxon>Rubrobacterales</taxon>
        <taxon>Rubrobacteraceae</taxon>
        <taxon>Rubrobacter</taxon>
    </lineage>
</organism>